<proteinExistence type="inferred from homology"/>
<evidence type="ECO:0000255" key="1">
    <source>
        <dbReference type="HAMAP-Rule" id="MF_01328"/>
    </source>
</evidence>
<evidence type="ECO:0000256" key="2">
    <source>
        <dbReference type="SAM" id="MobiDB-lite"/>
    </source>
</evidence>
<evidence type="ECO:0000305" key="3"/>
<reference key="1">
    <citation type="submission" date="2006-12" db="EMBL/GenBank/DDBJ databases">
        <title>Complete sequence of Shewanella amazonensis SB2B.</title>
        <authorList>
            <consortium name="US DOE Joint Genome Institute"/>
            <person name="Copeland A."/>
            <person name="Lucas S."/>
            <person name="Lapidus A."/>
            <person name="Barry K."/>
            <person name="Detter J.C."/>
            <person name="Glavina del Rio T."/>
            <person name="Hammon N."/>
            <person name="Israni S."/>
            <person name="Dalin E."/>
            <person name="Tice H."/>
            <person name="Pitluck S."/>
            <person name="Munk A.C."/>
            <person name="Brettin T."/>
            <person name="Bruce D."/>
            <person name="Han C."/>
            <person name="Tapia R."/>
            <person name="Gilna P."/>
            <person name="Schmutz J."/>
            <person name="Larimer F."/>
            <person name="Land M."/>
            <person name="Hauser L."/>
            <person name="Kyrpides N."/>
            <person name="Mikhailova N."/>
            <person name="Fredrickson J."/>
            <person name="Richardson P."/>
        </authorList>
    </citation>
    <scope>NUCLEOTIDE SEQUENCE [LARGE SCALE GENOMIC DNA]</scope>
    <source>
        <strain>ATCC BAA-1098 / SB2B</strain>
    </source>
</reference>
<name>RL4_SHEAM</name>
<dbReference type="EMBL" id="CP000507">
    <property type="protein sequence ID" value="ABL98425.1"/>
    <property type="molecule type" value="Genomic_DNA"/>
</dbReference>
<dbReference type="RefSeq" id="WP_011758335.1">
    <property type="nucleotide sequence ID" value="NC_008700.1"/>
</dbReference>
<dbReference type="SMR" id="A1S219"/>
<dbReference type="STRING" id="326297.Sama_0214"/>
<dbReference type="KEGG" id="saz:Sama_0214"/>
<dbReference type="eggNOG" id="COG0088">
    <property type="taxonomic scope" value="Bacteria"/>
</dbReference>
<dbReference type="HOGENOM" id="CLU_041575_5_2_6"/>
<dbReference type="OrthoDB" id="9803201at2"/>
<dbReference type="Proteomes" id="UP000009175">
    <property type="component" value="Chromosome"/>
</dbReference>
<dbReference type="GO" id="GO:1990904">
    <property type="term" value="C:ribonucleoprotein complex"/>
    <property type="evidence" value="ECO:0007669"/>
    <property type="project" value="UniProtKB-KW"/>
</dbReference>
<dbReference type="GO" id="GO:0005840">
    <property type="term" value="C:ribosome"/>
    <property type="evidence" value="ECO:0007669"/>
    <property type="project" value="UniProtKB-KW"/>
</dbReference>
<dbReference type="GO" id="GO:0019843">
    <property type="term" value="F:rRNA binding"/>
    <property type="evidence" value="ECO:0007669"/>
    <property type="project" value="UniProtKB-UniRule"/>
</dbReference>
<dbReference type="GO" id="GO:0003735">
    <property type="term" value="F:structural constituent of ribosome"/>
    <property type="evidence" value="ECO:0007669"/>
    <property type="project" value="InterPro"/>
</dbReference>
<dbReference type="GO" id="GO:0006412">
    <property type="term" value="P:translation"/>
    <property type="evidence" value="ECO:0007669"/>
    <property type="project" value="UniProtKB-UniRule"/>
</dbReference>
<dbReference type="FunFam" id="3.40.1370.10:FF:000001">
    <property type="entry name" value="50S ribosomal protein L4"/>
    <property type="match status" value="1"/>
</dbReference>
<dbReference type="Gene3D" id="3.40.1370.10">
    <property type="match status" value="1"/>
</dbReference>
<dbReference type="HAMAP" id="MF_01328_B">
    <property type="entry name" value="Ribosomal_uL4_B"/>
    <property type="match status" value="1"/>
</dbReference>
<dbReference type="InterPro" id="IPR002136">
    <property type="entry name" value="Ribosomal_uL4"/>
</dbReference>
<dbReference type="InterPro" id="IPR013005">
    <property type="entry name" value="Ribosomal_uL4-like"/>
</dbReference>
<dbReference type="InterPro" id="IPR023574">
    <property type="entry name" value="Ribosomal_uL4_dom_sf"/>
</dbReference>
<dbReference type="NCBIfam" id="TIGR03953">
    <property type="entry name" value="rplD_bact"/>
    <property type="match status" value="1"/>
</dbReference>
<dbReference type="PANTHER" id="PTHR10746">
    <property type="entry name" value="50S RIBOSOMAL PROTEIN L4"/>
    <property type="match status" value="1"/>
</dbReference>
<dbReference type="PANTHER" id="PTHR10746:SF6">
    <property type="entry name" value="LARGE RIBOSOMAL SUBUNIT PROTEIN UL4M"/>
    <property type="match status" value="1"/>
</dbReference>
<dbReference type="Pfam" id="PF00573">
    <property type="entry name" value="Ribosomal_L4"/>
    <property type="match status" value="1"/>
</dbReference>
<dbReference type="SUPFAM" id="SSF52166">
    <property type="entry name" value="Ribosomal protein L4"/>
    <property type="match status" value="1"/>
</dbReference>
<accession>A1S219</accession>
<gene>
    <name evidence="1" type="primary">rplD</name>
    <name type="ordered locus">Sama_0214</name>
</gene>
<feature type="chain" id="PRO_1000052490" description="Large ribosomal subunit protein uL4">
    <location>
        <begin position="1"/>
        <end position="201"/>
    </location>
</feature>
<feature type="region of interest" description="Disordered" evidence="2">
    <location>
        <begin position="46"/>
        <end position="71"/>
    </location>
</feature>
<organism>
    <name type="scientific">Shewanella amazonensis (strain ATCC BAA-1098 / SB2B)</name>
    <dbReference type="NCBI Taxonomy" id="326297"/>
    <lineage>
        <taxon>Bacteria</taxon>
        <taxon>Pseudomonadati</taxon>
        <taxon>Pseudomonadota</taxon>
        <taxon>Gammaproteobacteria</taxon>
        <taxon>Alteromonadales</taxon>
        <taxon>Shewanellaceae</taxon>
        <taxon>Shewanella</taxon>
    </lineage>
</organism>
<keyword id="KW-1185">Reference proteome</keyword>
<keyword id="KW-0687">Ribonucleoprotein</keyword>
<keyword id="KW-0689">Ribosomal protein</keyword>
<keyword id="KW-0694">RNA-binding</keyword>
<keyword id="KW-0699">rRNA-binding</keyword>
<comment type="function">
    <text evidence="1">One of the primary rRNA binding proteins, this protein initially binds near the 5'-end of the 23S rRNA. It is important during the early stages of 50S assembly. It makes multiple contacts with different domains of the 23S rRNA in the assembled 50S subunit and ribosome.</text>
</comment>
<comment type="function">
    <text evidence="1">Forms part of the polypeptide exit tunnel.</text>
</comment>
<comment type="subunit">
    <text evidence="1">Part of the 50S ribosomal subunit.</text>
</comment>
<comment type="similarity">
    <text evidence="1">Belongs to the universal ribosomal protein uL4 family.</text>
</comment>
<sequence length="201" mass="22106">MELVLKDASRALEVSETTFGRDFNEALVHQVVVAYAANARQGTRAQKTRAEITGTGKKPWRQKGTGRARAGGIKGPLWRGGGVTFAAKTQDHSQKVNKKMYRGALMSILSELVRQERLVVVEQFAVEAPKTKELKAKLKAMDLEDVLIVTAEVDENLFLAARNLYKVDVRDVAGLDPVSLIAFNKVLVTADAVKQIEEMLA</sequence>
<protein>
    <recommendedName>
        <fullName evidence="1">Large ribosomal subunit protein uL4</fullName>
    </recommendedName>
    <alternativeName>
        <fullName evidence="3">50S ribosomal protein L4</fullName>
    </alternativeName>
</protein>